<protein>
    <recommendedName>
        <fullName>Mite allergen Der p 3</fullName>
        <ecNumber>3.4.21.-</ecNumber>
    </recommendedName>
    <alternativeName>
        <fullName>Allergen Der p III</fullName>
    </alternativeName>
    <allergenName>Der p 3</allergenName>
</protein>
<proteinExistence type="evidence at protein level"/>
<comment type="subcellular location">
    <subcellularLocation>
        <location>Secreted</location>
    </subcellularLocation>
</comment>
<comment type="allergen">
    <text>Causes an allergic reaction in human. Common symptoms of mite allergy are bronchial asthma, allergic rhinitis and conjunctivitis.</text>
</comment>
<comment type="similarity">
    <text evidence="3">Belongs to the peptidase S1 family.</text>
</comment>
<evidence type="ECO:0000250" key="1"/>
<evidence type="ECO:0000255" key="2"/>
<evidence type="ECO:0000255" key="3">
    <source>
        <dbReference type="PROSITE-ProRule" id="PRU00274"/>
    </source>
</evidence>
<evidence type="ECO:0000269" key="4">
    <source>
    </source>
</evidence>
<evidence type="ECO:0000269" key="5">
    <source>
    </source>
</evidence>
<evidence type="ECO:0007829" key="6">
    <source>
        <dbReference type="PDB" id="7PZO"/>
    </source>
</evidence>
<sequence length="261" mass="28060">MIIYNILIVLLLAINTLANPILPASPNATIVGGEKALAGECPYQISLQSSSHFCGGTILDEYWILTAAHCVAGQTASKLSIRYNSLKHSLGGEKISVAKIFAHEKYDSYQIDNDIALIKLKSPMKLNQKNAKAVGLPAKGSDVKVGDQVRVSGWGYLEEGSYSLPSELRRVDIAVVSRKECNELYSKANAEVTDNMICGGDVANGGKDSCQGDSGGPVVDVKNNQVVGIVSWGYGCARKGYPGVYTRVGNFIDWIESKRSQ</sequence>
<name>DERP3_DERPT</name>
<feature type="signal peptide" evidence="2">
    <location>
        <begin position="1"/>
        <end position="18"/>
    </location>
</feature>
<feature type="propeptide" id="PRO_0000028145" evidence="4 5">
    <location>
        <begin position="19"/>
        <end position="29"/>
    </location>
</feature>
<feature type="chain" id="PRO_0000028146" description="Mite allergen Der p 3">
    <location>
        <begin position="30"/>
        <end position="261"/>
    </location>
</feature>
<feature type="domain" description="Peptidase S1" evidence="3">
    <location>
        <begin position="30"/>
        <end position="260"/>
    </location>
</feature>
<feature type="active site" description="Charge relay system" evidence="1">
    <location>
        <position position="69"/>
    </location>
</feature>
<feature type="active site" description="Charge relay system" evidence="1">
    <location>
        <position position="114"/>
    </location>
</feature>
<feature type="active site" description="Charge relay system" evidence="1">
    <location>
        <position position="214"/>
    </location>
</feature>
<feature type="site" description="Required for specificity">
    <location>
        <position position="208"/>
    </location>
</feature>
<feature type="disulfide bond" evidence="3">
    <location>
        <begin position="54"/>
        <end position="70"/>
    </location>
</feature>
<feature type="disulfide bond" evidence="3">
    <location>
        <begin position="181"/>
        <end position="198"/>
    </location>
</feature>
<feature type="disulfide bond" evidence="3">
    <location>
        <begin position="210"/>
        <end position="236"/>
    </location>
</feature>
<feature type="turn" evidence="6">
    <location>
        <begin position="38"/>
        <end position="40"/>
    </location>
</feature>
<feature type="strand" evidence="6">
    <location>
        <begin position="44"/>
        <end position="58"/>
    </location>
</feature>
<feature type="strand" evidence="6">
    <location>
        <begin position="60"/>
        <end position="66"/>
    </location>
</feature>
<feature type="helix" evidence="6">
    <location>
        <begin position="68"/>
        <end position="71"/>
    </location>
</feature>
<feature type="helix" evidence="6">
    <location>
        <begin position="76"/>
        <end position="78"/>
    </location>
</feature>
<feature type="strand" evidence="6">
    <location>
        <begin position="80"/>
        <end position="84"/>
    </location>
</feature>
<feature type="strand" evidence="6">
    <location>
        <begin position="86"/>
        <end position="102"/>
    </location>
</feature>
<feature type="turn" evidence="6">
    <location>
        <begin position="108"/>
        <end position="111"/>
    </location>
</feature>
<feature type="strand" evidence="6">
    <location>
        <begin position="116"/>
        <end position="122"/>
    </location>
</feature>
<feature type="strand" evidence="6">
    <location>
        <begin position="127"/>
        <end position="130"/>
    </location>
</feature>
<feature type="strand" evidence="6">
    <location>
        <begin position="148"/>
        <end position="154"/>
    </location>
</feature>
<feature type="strand" evidence="6">
    <location>
        <begin position="169"/>
        <end position="176"/>
    </location>
</feature>
<feature type="helix" evidence="6">
    <location>
        <begin position="178"/>
        <end position="184"/>
    </location>
</feature>
<feature type="helix" evidence="6">
    <location>
        <begin position="185"/>
        <end position="188"/>
    </location>
</feature>
<feature type="strand" evidence="6">
    <location>
        <begin position="196"/>
        <end position="200"/>
    </location>
</feature>
<feature type="turn" evidence="6">
    <location>
        <begin position="202"/>
        <end position="204"/>
    </location>
</feature>
<feature type="strand" evidence="6">
    <location>
        <begin position="217"/>
        <end position="220"/>
    </location>
</feature>
<feature type="turn" evidence="6">
    <location>
        <begin position="221"/>
        <end position="224"/>
    </location>
</feature>
<feature type="strand" evidence="6">
    <location>
        <begin position="225"/>
        <end position="232"/>
    </location>
</feature>
<feature type="strand" evidence="6">
    <location>
        <begin position="234"/>
        <end position="237"/>
    </location>
</feature>
<feature type="strand" evidence="6">
    <location>
        <begin position="243"/>
        <end position="247"/>
    </location>
</feature>
<feature type="helix" evidence="6">
    <location>
        <begin position="248"/>
        <end position="251"/>
    </location>
</feature>
<feature type="helix" evidence="6">
    <location>
        <begin position="252"/>
        <end position="258"/>
    </location>
</feature>
<accession>P39675</accession>
<reference key="1">
    <citation type="journal article" date="1994" name="Clin. Exp. Allergy">
        <title>Cloning and sequencing of the Dermatophagoides pteronyssinus group III allergen, Der p III.</title>
        <authorList>
            <person name="Smith W.-A."/>
            <person name="Chua K.-Y."/>
            <person name="Kuo M.C."/>
            <person name="Rogers B.L."/>
            <person name="Thomas W.R."/>
        </authorList>
    </citation>
    <scope>NUCLEOTIDE SEQUENCE [MRNA]</scope>
    <scope>PROTEIN SEQUENCE OF 30-59</scope>
</reference>
<reference key="2">
    <citation type="journal article" date="1992" name="Immunology">
        <title>The group III allergen from the house dust mite Dermatophagoides pteronyssinus is a trypsin-like enzyme.</title>
        <authorList>
            <person name="Stewart G.A."/>
            <person name="Ward L.D."/>
            <person name="Simpson R.J."/>
            <person name="Thompson P.J."/>
        </authorList>
    </citation>
    <scope>PROTEIN SEQUENCE OF 30-47 AND 223-229</scope>
</reference>
<gene>
    <name type="primary">DERP3</name>
</gene>
<organism>
    <name type="scientific">Dermatophagoides pteronyssinus</name>
    <name type="common">European house dust mite</name>
    <dbReference type="NCBI Taxonomy" id="6956"/>
    <lineage>
        <taxon>Eukaryota</taxon>
        <taxon>Metazoa</taxon>
        <taxon>Ecdysozoa</taxon>
        <taxon>Arthropoda</taxon>
        <taxon>Chelicerata</taxon>
        <taxon>Arachnida</taxon>
        <taxon>Acari</taxon>
        <taxon>Acariformes</taxon>
        <taxon>Sarcoptiformes</taxon>
        <taxon>Astigmata</taxon>
        <taxon>Psoroptidia</taxon>
        <taxon>Analgoidea</taxon>
        <taxon>Pyroglyphidae</taxon>
        <taxon>Dermatophagoidinae</taxon>
        <taxon>Dermatophagoides</taxon>
    </lineage>
</organism>
<dbReference type="EC" id="3.4.21.-"/>
<dbReference type="EMBL" id="U11719">
    <property type="protein sequence ID" value="AAA19973.1"/>
    <property type="molecule type" value="mRNA"/>
</dbReference>
<dbReference type="PDB" id="7PZO">
    <property type="method" value="X-ray"/>
    <property type="resolution" value="2.25 A"/>
    <property type="chains" value="A/B=30-259"/>
</dbReference>
<dbReference type="PDBsum" id="7PZO"/>
<dbReference type="SMR" id="P39675"/>
<dbReference type="FunCoup" id="P39675">
    <property type="interactions" value="31"/>
</dbReference>
<dbReference type="Allergome" id="317">
    <property type="allergen name" value="Der p 3"/>
</dbReference>
<dbReference type="Allergome" id="3263">
    <property type="allergen name" value="Der p 3.0101"/>
</dbReference>
<dbReference type="MEROPS" id="S01.031"/>
<dbReference type="InParanoid" id="P39675"/>
<dbReference type="OrthoDB" id="10051896at2759"/>
<dbReference type="SABIO-RK" id="P39675"/>
<dbReference type="Proteomes" id="UP000515146">
    <property type="component" value="Unplaced"/>
</dbReference>
<dbReference type="GO" id="GO:0005576">
    <property type="term" value="C:extracellular region"/>
    <property type="evidence" value="ECO:0007669"/>
    <property type="project" value="UniProtKB-SubCell"/>
</dbReference>
<dbReference type="GO" id="GO:0004252">
    <property type="term" value="F:serine-type endopeptidase activity"/>
    <property type="evidence" value="ECO:0007669"/>
    <property type="project" value="InterPro"/>
</dbReference>
<dbReference type="GO" id="GO:0006508">
    <property type="term" value="P:proteolysis"/>
    <property type="evidence" value="ECO:0007669"/>
    <property type="project" value="UniProtKB-KW"/>
</dbReference>
<dbReference type="CDD" id="cd00190">
    <property type="entry name" value="Tryp_SPc"/>
    <property type="match status" value="1"/>
</dbReference>
<dbReference type="FunFam" id="2.40.10.10:FF:000077">
    <property type="entry name" value="Predicted protein"/>
    <property type="match status" value="1"/>
</dbReference>
<dbReference type="Gene3D" id="2.40.10.10">
    <property type="entry name" value="Trypsin-like serine proteases"/>
    <property type="match status" value="1"/>
</dbReference>
<dbReference type="InterPro" id="IPR009003">
    <property type="entry name" value="Peptidase_S1_PA"/>
</dbReference>
<dbReference type="InterPro" id="IPR043504">
    <property type="entry name" value="Peptidase_S1_PA_chymotrypsin"/>
</dbReference>
<dbReference type="InterPro" id="IPR001314">
    <property type="entry name" value="Peptidase_S1A"/>
</dbReference>
<dbReference type="InterPro" id="IPR001254">
    <property type="entry name" value="Trypsin_dom"/>
</dbReference>
<dbReference type="InterPro" id="IPR018114">
    <property type="entry name" value="TRYPSIN_HIS"/>
</dbReference>
<dbReference type="InterPro" id="IPR033116">
    <property type="entry name" value="TRYPSIN_SER"/>
</dbReference>
<dbReference type="PANTHER" id="PTHR24252">
    <property type="entry name" value="ACROSIN-RELATED"/>
    <property type="match status" value="1"/>
</dbReference>
<dbReference type="PANTHER" id="PTHR24252:SF7">
    <property type="entry name" value="HYALIN"/>
    <property type="match status" value="1"/>
</dbReference>
<dbReference type="Pfam" id="PF00089">
    <property type="entry name" value="Trypsin"/>
    <property type="match status" value="1"/>
</dbReference>
<dbReference type="PRINTS" id="PR00722">
    <property type="entry name" value="CHYMOTRYPSIN"/>
</dbReference>
<dbReference type="SMART" id="SM00020">
    <property type="entry name" value="Tryp_SPc"/>
    <property type="match status" value="1"/>
</dbReference>
<dbReference type="SUPFAM" id="SSF50494">
    <property type="entry name" value="Trypsin-like serine proteases"/>
    <property type="match status" value="1"/>
</dbReference>
<dbReference type="PROSITE" id="PS50240">
    <property type="entry name" value="TRYPSIN_DOM"/>
    <property type="match status" value="1"/>
</dbReference>
<dbReference type="PROSITE" id="PS00134">
    <property type="entry name" value="TRYPSIN_HIS"/>
    <property type="match status" value="1"/>
</dbReference>
<dbReference type="PROSITE" id="PS00135">
    <property type="entry name" value="TRYPSIN_SER"/>
    <property type="match status" value="1"/>
</dbReference>
<keyword id="KW-0002">3D-structure</keyword>
<keyword id="KW-0020">Allergen</keyword>
<keyword id="KW-0903">Direct protein sequencing</keyword>
<keyword id="KW-1015">Disulfide bond</keyword>
<keyword id="KW-0378">Hydrolase</keyword>
<keyword id="KW-0645">Protease</keyword>
<keyword id="KW-1185">Reference proteome</keyword>
<keyword id="KW-0964">Secreted</keyword>
<keyword id="KW-0720">Serine protease</keyword>
<keyword id="KW-0732">Signal</keyword>
<keyword id="KW-0865">Zymogen</keyword>